<protein>
    <recommendedName>
        <fullName evidence="1">Ribosomal RNA small subunit methyltransferase A</fullName>
        <ecNumber evidence="1">2.1.1.182</ecNumber>
    </recommendedName>
    <alternativeName>
        <fullName evidence="1">16S rRNA (adenine(1518)-N(6)/adenine(1519)-N(6))-dimethyltransferase</fullName>
    </alternativeName>
    <alternativeName>
        <fullName evidence="1">16S rRNA dimethyladenosine transferase</fullName>
    </alternativeName>
    <alternativeName>
        <fullName evidence="1">16S rRNA dimethylase</fullName>
    </alternativeName>
    <alternativeName>
        <fullName evidence="1">S-adenosylmethionine-6-N', N'-adenosyl(rRNA) dimethyltransferase</fullName>
    </alternativeName>
</protein>
<evidence type="ECO:0000255" key="1">
    <source>
        <dbReference type="HAMAP-Rule" id="MF_00607"/>
    </source>
</evidence>
<name>RSMA_PROM9</name>
<keyword id="KW-0963">Cytoplasm</keyword>
<keyword id="KW-0489">Methyltransferase</keyword>
<keyword id="KW-0694">RNA-binding</keyword>
<keyword id="KW-0698">rRNA processing</keyword>
<keyword id="KW-0949">S-adenosyl-L-methionine</keyword>
<keyword id="KW-0808">Transferase</keyword>
<proteinExistence type="inferred from homology"/>
<reference key="1">
    <citation type="journal article" date="2006" name="Science">
        <title>Genomic islands and the ecology and evolution of Prochlorococcus.</title>
        <authorList>
            <person name="Coleman M.L."/>
            <person name="Sullivan M.B."/>
            <person name="Martiny A.C."/>
            <person name="Steglich C."/>
            <person name="Barry K."/>
            <person name="Delong E.F."/>
            <person name="Chisholm S.W."/>
        </authorList>
    </citation>
    <scope>NUCLEOTIDE SEQUENCE [LARGE SCALE GENOMIC DNA]</scope>
    <source>
        <strain>MIT 9312</strain>
    </source>
</reference>
<dbReference type="EC" id="2.1.1.182" evidence="1"/>
<dbReference type="EMBL" id="CP000111">
    <property type="protein sequence ID" value="ABB49926.1"/>
    <property type="molecule type" value="Genomic_DNA"/>
</dbReference>
<dbReference type="RefSeq" id="WP_011376421.1">
    <property type="nucleotide sequence ID" value="NC_007577.1"/>
</dbReference>
<dbReference type="SMR" id="Q31B19"/>
<dbReference type="STRING" id="74546.PMT9312_0866"/>
<dbReference type="KEGG" id="pmi:PMT9312_0866"/>
<dbReference type="eggNOG" id="COG0030">
    <property type="taxonomic scope" value="Bacteria"/>
</dbReference>
<dbReference type="HOGENOM" id="CLU_041220_0_1_3"/>
<dbReference type="OrthoDB" id="9814755at2"/>
<dbReference type="Proteomes" id="UP000002715">
    <property type="component" value="Chromosome"/>
</dbReference>
<dbReference type="GO" id="GO:0005829">
    <property type="term" value="C:cytosol"/>
    <property type="evidence" value="ECO:0007669"/>
    <property type="project" value="TreeGrafter"/>
</dbReference>
<dbReference type="GO" id="GO:0052908">
    <property type="term" value="F:16S rRNA (adenine(1518)-N(6)/adenine(1519)-N(6))-dimethyltransferase activity"/>
    <property type="evidence" value="ECO:0007669"/>
    <property type="project" value="UniProtKB-EC"/>
</dbReference>
<dbReference type="GO" id="GO:0003723">
    <property type="term" value="F:RNA binding"/>
    <property type="evidence" value="ECO:0007669"/>
    <property type="project" value="UniProtKB-KW"/>
</dbReference>
<dbReference type="CDD" id="cd02440">
    <property type="entry name" value="AdoMet_MTases"/>
    <property type="match status" value="1"/>
</dbReference>
<dbReference type="Gene3D" id="1.10.8.100">
    <property type="entry name" value="Ribosomal RNA adenine dimethylase-like, domain 2"/>
    <property type="match status" value="1"/>
</dbReference>
<dbReference type="Gene3D" id="3.40.50.150">
    <property type="entry name" value="Vaccinia Virus protein VP39"/>
    <property type="match status" value="1"/>
</dbReference>
<dbReference type="HAMAP" id="MF_00607">
    <property type="entry name" value="16SrRNA_methyltr_A"/>
    <property type="match status" value="1"/>
</dbReference>
<dbReference type="InterPro" id="IPR001737">
    <property type="entry name" value="KsgA/Erm"/>
</dbReference>
<dbReference type="InterPro" id="IPR023165">
    <property type="entry name" value="rRNA_Ade_diMease-like_C"/>
</dbReference>
<dbReference type="InterPro" id="IPR020596">
    <property type="entry name" value="rRNA_Ade_Mease_Trfase_CS"/>
</dbReference>
<dbReference type="InterPro" id="IPR020598">
    <property type="entry name" value="rRNA_Ade_methylase_Trfase_N"/>
</dbReference>
<dbReference type="InterPro" id="IPR011530">
    <property type="entry name" value="rRNA_adenine_dimethylase"/>
</dbReference>
<dbReference type="InterPro" id="IPR029063">
    <property type="entry name" value="SAM-dependent_MTases_sf"/>
</dbReference>
<dbReference type="NCBIfam" id="TIGR00755">
    <property type="entry name" value="ksgA"/>
    <property type="match status" value="1"/>
</dbReference>
<dbReference type="PANTHER" id="PTHR11727">
    <property type="entry name" value="DIMETHYLADENOSINE TRANSFERASE"/>
    <property type="match status" value="1"/>
</dbReference>
<dbReference type="PANTHER" id="PTHR11727:SF7">
    <property type="entry name" value="DIMETHYLADENOSINE TRANSFERASE-RELATED"/>
    <property type="match status" value="1"/>
</dbReference>
<dbReference type="Pfam" id="PF00398">
    <property type="entry name" value="RrnaAD"/>
    <property type="match status" value="1"/>
</dbReference>
<dbReference type="SMART" id="SM00650">
    <property type="entry name" value="rADc"/>
    <property type="match status" value="1"/>
</dbReference>
<dbReference type="SUPFAM" id="SSF53335">
    <property type="entry name" value="S-adenosyl-L-methionine-dependent methyltransferases"/>
    <property type="match status" value="1"/>
</dbReference>
<dbReference type="PROSITE" id="PS01131">
    <property type="entry name" value="RRNA_A_DIMETH"/>
    <property type="match status" value="1"/>
</dbReference>
<dbReference type="PROSITE" id="PS51689">
    <property type="entry name" value="SAM_RNA_A_N6_MT"/>
    <property type="match status" value="1"/>
</dbReference>
<comment type="function">
    <text evidence="1">Specifically dimethylates two adjacent adenosines (A1518 and A1519) in the loop of a conserved hairpin near the 3'-end of 16S rRNA in the 30S particle. May play a critical role in biogenesis of 30S subunits.</text>
</comment>
<comment type="catalytic activity">
    <reaction evidence="1">
        <text>adenosine(1518)/adenosine(1519) in 16S rRNA + 4 S-adenosyl-L-methionine = N(6)-dimethyladenosine(1518)/N(6)-dimethyladenosine(1519) in 16S rRNA + 4 S-adenosyl-L-homocysteine + 4 H(+)</text>
        <dbReference type="Rhea" id="RHEA:19609"/>
        <dbReference type="Rhea" id="RHEA-COMP:10232"/>
        <dbReference type="Rhea" id="RHEA-COMP:10233"/>
        <dbReference type="ChEBI" id="CHEBI:15378"/>
        <dbReference type="ChEBI" id="CHEBI:57856"/>
        <dbReference type="ChEBI" id="CHEBI:59789"/>
        <dbReference type="ChEBI" id="CHEBI:74411"/>
        <dbReference type="ChEBI" id="CHEBI:74493"/>
        <dbReference type="EC" id="2.1.1.182"/>
    </reaction>
</comment>
<comment type="subcellular location">
    <subcellularLocation>
        <location evidence="1">Cytoplasm</location>
    </subcellularLocation>
</comment>
<comment type="similarity">
    <text evidence="1">Belongs to the class I-like SAM-binding methyltransferase superfamily. rRNA adenine N(6)-methyltransferase family. RsmA subfamily.</text>
</comment>
<feature type="chain" id="PRO_0000257319" description="Ribosomal RNA small subunit methyltransferase A">
    <location>
        <begin position="1"/>
        <end position="276"/>
    </location>
</feature>
<feature type="binding site" evidence="1">
    <location>
        <position position="15"/>
    </location>
    <ligand>
        <name>S-adenosyl-L-methionine</name>
        <dbReference type="ChEBI" id="CHEBI:59789"/>
    </ligand>
</feature>
<feature type="binding site" evidence="1">
    <location>
        <position position="17"/>
    </location>
    <ligand>
        <name>S-adenosyl-L-methionine</name>
        <dbReference type="ChEBI" id="CHEBI:59789"/>
    </ligand>
</feature>
<feature type="binding site" evidence="1">
    <location>
        <position position="42"/>
    </location>
    <ligand>
        <name>S-adenosyl-L-methionine</name>
        <dbReference type="ChEBI" id="CHEBI:59789"/>
    </ligand>
</feature>
<feature type="binding site" evidence="1">
    <location>
        <position position="64"/>
    </location>
    <ligand>
        <name>S-adenosyl-L-methionine</name>
        <dbReference type="ChEBI" id="CHEBI:59789"/>
    </ligand>
</feature>
<feature type="binding site" evidence="1">
    <location>
        <position position="89"/>
    </location>
    <ligand>
        <name>S-adenosyl-L-methionine</name>
        <dbReference type="ChEBI" id="CHEBI:59789"/>
    </ligand>
</feature>
<feature type="binding site" evidence="1">
    <location>
        <position position="108"/>
    </location>
    <ligand>
        <name>S-adenosyl-L-methionine</name>
        <dbReference type="ChEBI" id="CHEBI:59789"/>
    </ligand>
</feature>
<gene>
    <name evidence="1" type="primary">rsmA</name>
    <name evidence="1" type="synonym">ksgA</name>
    <name type="ordered locus">PMT9312_0866</name>
</gene>
<sequence>MNSKNYHQKKRFGQHWLVNKKILEKIKEIAVLNENDFILEIGPGKGALTSKLLDSEIKKLHAIELDKDLINLLNDKFNNNDKFSLQQGDILSVNLDSINKKITKVIANIPYNITGPILDIFIGRLGIIRNYNYEKIIFLMQKDVVDRILSKEGSPNAGALSIRIQLLSKIKRICDVPPSSFSPPPKVFSSLVVFEPIKNDLRLDISLEKYIDKLLRISFNSRRKMLRNTLNSILSNEEINELSESSKVCFNLRPQDISIHQWIKLAENCIKIKKKI</sequence>
<organism>
    <name type="scientific">Prochlorococcus marinus (strain MIT 9312)</name>
    <dbReference type="NCBI Taxonomy" id="74546"/>
    <lineage>
        <taxon>Bacteria</taxon>
        <taxon>Bacillati</taxon>
        <taxon>Cyanobacteriota</taxon>
        <taxon>Cyanophyceae</taxon>
        <taxon>Synechococcales</taxon>
        <taxon>Prochlorococcaceae</taxon>
        <taxon>Prochlorococcus</taxon>
    </lineage>
</organism>
<accession>Q31B19</accession>